<comment type="function">
    <text evidence="2">May control the production of phosphatidylinositol 4-phosphate (PI4P) by the STT4 PI 4-kinase. Mediates proper localization of STT4 to the plasma membrane.</text>
</comment>
<comment type="subcellular location">
    <subcellularLocation>
        <location evidence="2 3">Cell membrane</location>
        <topology evidence="2 3">Multi-pass membrane protein</topology>
    </subcellularLocation>
</comment>
<comment type="similarity">
    <text evidence="4">Belongs to the SFK1 family.</text>
</comment>
<proteinExistence type="evidence at protein level"/>
<accession>P35735</accession>
<accession>D6VXN6</accession>
<keyword id="KW-1003">Cell membrane</keyword>
<keyword id="KW-0444">Lipid biosynthesis</keyword>
<keyword id="KW-0443">Lipid metabolism</keyword>
<keyword id="KW-0472">Membrane</keyword>
<keyword id="KW-0597">Phosphoprotein</keyword>
<keyword id="KW-1185">Reference proteome</keyword>
<keyword id="KW-0812">Transmembrane</keyword>
<keyword id="KW-1133">Transmembrane helix</keyword>
<gene>
    <name type="primary">SFK1</name>
    <name type="ordered locus">YKL051W</name>
    <name type="ORF">YKL303</name>
</gene>
<organism>
    <name type="scientific">Saccharomyces cerevisiae (strain ATCC 204508 / S288c)</name>
    <name type="common">Baker's yeast</name>
    <dbReference type="NCBI Taxonomy" id="559292"/>
    <lineage>
        <taxon>Eukaryota</taxon>
        <taxon>Fungi</taxon>
        <taxon>Dikarya</taxon>
        <taxon>Ascomycota</taxon>
        <taxon>Saccharomycotina</taxon>
        <taxon>Saccharomycetes</taxon>
        <taxon>Saccharomycetales</taxon>
        <taxon>Saccharomycetaceae</taxon>
        <taxon>Saccharomyces</taxon>
    </lineage>
</organism>
<dbReference type="EMBL" id="X75781">
    <property type="protein sequence ID" value="CAA53425.1"/>
    <property type="molecule type" value="Genomic_DNA"/>
</dbReference>
<dbReference type="EMBL" id="Z28051">
    <property type="protein sequence ID" value="CAA81886.1"/>
    <property type="molecule type" value="Genomic_DNA"/>
</dbReference>
<dbReference type="EMBL" id="BK006944">
    <property type="protein sequence ID" value="DAA09106.1"/>
    <property type="molecule type" value="Genomic_DNA"/>
</dbReference>
<dbReference type="PIR" id="S37873">
    <property type="entry name" value="S37873"/>
</dbReference>
<dbReference type="RefSeq" id="NP_012873.1">
    <property type="nucleotide sequence ID" value="NM_001179617.1"/>
</dbReference>
<dbReference type="SMR" id="P35735"/>
<dbReference type="BioGRID" id="34082">
    <property type="interactions" value="116"/>
</dbReference>
<dbReference type="DIP" id="DIP-5309N"/>
<dbReference type="FunCoup" id="P35735">
    <property type="interactions" value="118"/>
</dbReference>
<dbReference type="IntAct" id="P35735">
    <property type="interactions" value="47"/>
</dbReference>
<dbReference type="MINT" id="P35735"/>
<dbReference type="STRING" id="4932.YKL051W"/>
<dbReference type="iPTMnet" id="P35735"/>
<dbReference type="PaxDb" id="4932-YKL051W"/>
<dbReference type="PeptideAtlas" id="P35735"/>
<dbReference type="EnsemblFungi" id="YKL051W_mRNA">
    <property type="protein sequence ID" value="YKL051W"/>
    <property type="gene ID" value="YKL051W"/>
</dbReference>
<dbReference type="GeneID" id="853815"/>
<dbReference type="KEGG" id="sce:YKL051W"/>
<dbReference type="AGR" id="SGD:S000001534"/>
<dbReference type="SGD" id="S000001534">
    <property type="gene designation" value="SFK1"/>
</dbReference>
<dbReference type="VEuPathDB" id="FungiDB:YKL051W"/>
<dbReference type="eggNOG" id="ENOG502RZQS">
    <property type="taxonomic scope" value="Eukaryota"/>
</dbReference>
<dbReference type="HOGENOM" id="CLU_050573_1_0_1"/>
<dbReference type="InParanoid" id="P35735"/>
<dbReference type="OMA" id="HRVHIAM"/>
<dbReference type="OrthoDB" id="10032492at2759"/>
<dbReference type="BioCyc" id="YEAST:G3O-31852-MONOMER"/>
<dbReference type="BioGRID-ORCS" id="853815">
    <property type="hits" value="5 hits in 10 CRISPR screens"/>
</dbReference>
<dbReference type="PRO" id="PR:P35735"/>
<dbReference type="Proteomes" id="UP000002311">
    <property type="component" value="Chromosome XI"/>
</dbReference>
<dbReference type="RNAct" id="P35735">
    <property type="molecule type" value="protein"/>
</dbReference>
<dbReference type="GO" id="GO:0071944">
    <property type="term" value="C:cell periphery"/>
    <property type="evidence" value="ECO:0007005"/>
    <property type="project" value="SGD"/>
</dbReference>
<dbReference type="GO" id="GO:0005886">
    <property type="term" value="C:plasma membrane"/>
    <property type="evidence" value="ECO:0000314"/>
    <property type="project" value="SGD"/>
</dbReference>
<dbReference type="GO" id="GO:0030036">
    <property type="term" value="P:actin cytoskeleton organization"/>
    <property type="evidence" value="ECO:0000316"/>
    <property type="project" value="SGD"/>
</dbReference>
<dbReference type="GO" id="GO:0006629">
    <property type="term" value="P:lipid metabolic process"/>
    <property type="evidence" value="ECO:0007669"/>
    <property type="project" value="UniProtKB-KW"/>
</dbReference>
<dbReference type="GO" id="GO:0061093">
    <property type="term" value="P:negative regulation of phospholipid translocation"/>
    <property type="evidence" value="ECO:0000315"/>
    <property type="project" value="SGD"/>
</dbReference>
<dbReference type="GO" id="GO:0007033">
    <property type="term" value="P:vacuole organization"/>
    <property type="evidence" value="ECO:0000316"/>
    <property type="project" value="SGD"/>
</dbReference>
<dbReference type="InterPro" id="IPR050911">
    <property type="entry name" value="DRAM/TMEM150_Autophagy_Mod"/>
</dbReference>
<dbReference type="InterPro" id="IPR019402">
    <property type="entry name" value="Frag1/DRAM/Sfk1"/>
</dbReference>
<dbReference type="PANTHER" id="PTHR21324:SF2">
    <property type="entry name" value="EG:22E5.9 PROTEIN"/>
    <property type="match status" value="1"/>
</dbReference>
<dbReference type="PANTHER" id="PTHR21324">
    <property type="entry name" value="FASTING-INDUCIBLE INTEGRAL MEMBRANE PROTEIN TM6P1-RELATED"/>
    <property type="match status" value="1"/>
</dbReference>
<dbReference type="Pfam" id="PF10277">
    <property type="entry name" value="Frag1"/>
    <property type="match status" value="1"/>
</dbReference>
<evidence type="ECO:0000255" key="1"/>
<evidence type="ECO:0000269" key="2">
    <source>
    </source>
</evidence>
<evidence type="ECO:0000269" key="3">
    <source>
    </source>
</evidence>
<evidence type="ECO:0000305" key="4"/>
<evidence type="ECO:0007744" key="5">
    <source>
    </source>
</evidence>
<reference key="1">
    <citation type="journal article" date="1994" name="Yeast">
        <title>Sequence of a 28.6 kb region of yeast chromosome XI includes the FBA1 and TOA2 genes, an open reading frame (ORF) similar to a translationally controlled tumour protein, one ORF containing motifs also found in plant storage proteins and 13 ORFs with weak or no homology to known proteins.</title>
        <authorList>
            <person name="Rasmussen S.W."/>
        </authorList>
    </citation>
    <scope>NUCLEOTIDE SEQUENCE [GENOMIC DNA]</scope>
    <source>
        <strain>ATCC 204508 / S288c</strain>
    </source>
</reference>
<reference key="2">
    <citation type="journal article" date="1994" name="Nature">
        <title>Complete DNA sequence of yeast chromosome XI.</title>
        <authorList>
            <person name="Dujon B."/>
            <person name="Alexandraki D."/>
            <person name="Andre B."/>
            <person name="Ansorge W."/>
            <person name="Baladron V."/>
            <person name="Ballesta J.P.G."/>
            <person name="Banrevi A."/>
            <person name="Bolle P.-A."/>
            <person name="Bolotin-Fukuhara M."/>
            <person name="Bossier P."/>
            <person name="Bou G."/>
            <person name="Boyer J."/>
            <person name="Buitrago M.J."/>
            <person name="Cheret G."/>
            <person name="Colleaux L."/>
            <person name="Daignan-Fornier B."/>
            <person name="del Rey F."/>
            <person name="Dion C."/>
            <person name="Domdey H."/>
            <person name="Duesterhoeft A."/>
            <person name="Duesterhus S."/>
            <person name="Entian K.-D."/>
            <person name="Erfle H."/>
            <person name="Esteban P.F."/>
            <person name="Feldmann H."/>
            <person name="Fernandes L."/>
            <person name="Fobo G.M."/>
            <person name="Fritz C."/>
            <person name="Fukuhara H."/>
            <person name="Gabel C."/>
            <person name="Gaillon L."/>
            <person name="Garcia-Cantalejo J.M."/>
            <person name="Garcia-Ramirez J.J."/>
            <person name="Gent M.E."/>
            <person name="Ghazvini M."/>
            <person name="Goffeau A."/>
            <person name="Gonzalez A."/>
            <person name="Grothues D."/>
            <person name="Guerreiro P."/>
            <person name="Hegemann J.H."/>
            <person name="Hewitt N."/>
            <person name="Hilger F."/>
            <person name="Hollenberg C.P."/>
            <person name="Horaitis O."/>
            <person name="Indge K.J."/>
            <person name="Jacquier A."/>
            <person name="James C.M."/>
            <person name="Jauniaux J.-C."/>
            <person name="Jimenez A."/>
            <person name="Keuchel H."/>
            <person name="Kirchrath L."/>
            <person name="Kleine K."/>
            <person name="Koetter P."/>
            <person name="Legrain P."/>
            <person name="Liebl S."/>
            <person name="Louis E.J."/>
            <person name="Maia e Silva A."/>
            <person name="Marck C."/>
            <person name="Monnier A.-L."/>
            <person name="Moestl D."/>
            <person name="Mueller S."/>
            <person name="Obermaier B."/>
            <person name="Oliver S.G."/>
            <person name="Pallier C."/>
            <person name="Pascolo S."/>
            <person name="Pfeiffer F."/>
            <person name="Philippsen P."/>
            <person name="Planta R.J."/>
            <person name="Pohl F.M."/>
            <person name="Pohl T.M."/>
            <person name="Poehlmann R."/>
            <person name="Portetelle D."/>
            <person name="Purnelle B."/>
            <person name="Puzos V."/>
            <person name="Ramezani Rad M."/>
            <person name="Rasmussen S.W."/>
            <person name="Remacha M.A."/>
            <person name="Revuelta J.L."/>
            <person name="Richard G.-F."/>
            <person name="Rieger M."/>
            <person name="Rodrigues-Pousada C."/>
            <person name="Rose M."/>
            <person name="Rupp T."/>
            <person name="Santos M.A."/>
            <person name="Schwager C."/>
            <person name="Sensen C."/>
            <person name="Skala J."/>
            <person name="Soares H."/>
            <person name="Sor F."/>
            <person name="Stegemann J."/>
            <person name="Tettelin H."/>
            <person name="Thierry A."/>
            <person name="Tzermia M."/>
            <person name="Urrestarazu L.A."/>
            <person name="van Dyck L."/>
            <person name="van Vliet-Reedijk J.C."/>
            <person name="Valens M."/>
            <person name="Vandenbol M."/>
            <person name="Vilela C."/>
            <person name="Vissers S."/>
            <person name="von Wettstein D."/>
            <person name="Voss H."/>
            <person name="Wiemann S."/>
            <person name="Xu G."/>
            <person name="Zimmermann J."/>
            <person name="Haasemann M."/>
            <person name="Becker I."/>
            <person name="Mewes H.-W."/>
        </authorList>
    </citation>
    <scope>NUCLEOTIDE SEQUENCE [LARGE SCALE GENOMIC DNA]</scope>
    <source>
        <strain>ATCC 204508 / S288c</strain>
    </source>
</reference>
<reference key="3">
    <citation type="journal article" date="2014" name="G3 (Bethesda)">
        <title>The reference genome sequence of Saccharomyces cerevisiae: Then and now.</title>
        <authorList>
            <person name="Engel S.R."/>
            <person name="Dietrich F.S."/>
            <person name="Fisk D.G."/>
            <person name="Binkley G."/>
            <person name="Balakrishnan R."/>
            <person name="Costanzo M.C."/>
            <person name="Dwight S.S."/>
            <person name="Hitz B.C."/>
            <person name="Karra K."/>
            <person name="Nash R.S."/>
            <person name="Weng S."/>
            <person name="Wong E.D."/>
            <person name="Lloyd P."/>
            <person name="Skrzypek M.S."/>
            <person name="Miyasato S.R."/>
            <person name="Simison M."/>
            <person name="Cherry J.M."/>
        </authorList>
    </citation>
    <scope>GENOME REANNOTATION</scope>
    <source>
        <strain>ATCC 204508 / S288c</strain>
    </source>
</reference>
<reference key="4">
    <citation type="journal article" date="2002" name="Dev. Cell">
        <title>Stt4 PI 4-kinase localizes to the plasma membrane and functions in the Pkc1-mediated MAP kinase cascade.</title>
        <authorList>
            <person name="Audhya A."/>
            <person name="Emr S.D."/>
        </authorList>
    </citation>
    <scope>FUNCTION</scope>
    <scope>SUBCELLULAR LOCATION</scope>
</reference>
<reference key="5">
    <citation type="journal article" date="2003" name="Nature">
        <title>Global analysis of protein localization in budding yeast.</title>
        <authorList>
            <person name="Huh W.-K."/>
            <person name="Falvo J.V."/>
            <person name="Gerke L.C."/>
            <person name="Carroll A.S."/>
            <person name="Howson R.W."/>
            <person name="Weissman J.S."/>
            <person name="O'Shea E.K."/>
        </authorList>
    </citation>
    <scope>SUBCELLULAR LOCATION [LARGE SCALE ANALYSIS]</scope>
</reference>
<reference key="6">
    <citation type="journal article" date="2006" name="Proc. Natl. Acad. Sci. U.S.A.">
        <title>A global topology map of the Saccharomyces cerevisiae membrane proteome.</title>
        <authorList>
            <person name="Kim H."/>
            <person name="Melen K."/>
            <person name="Oesterberg M."/>
            <person name="von Heijne G."/>
        </authorList>
    </citation>
    <scope>TOPOLOGY [LARGE SCALE ANALYSIS]</scope>
    <source>
        <strain>ATCC 208353 / W303-1A</strain>
    </source>
</reference>
<reference key="7">
    <citation type="journal article" date="2009" name="Science">
        <title>Global analysis of Cdk1 substrate phosphorylation sites provides insights into evolution.</title>
        <authorList>
            <person name="Holt L.J."/>
            <person name="Tuch B.B."/>
            <person name="Villen J."/>
            <person name="Johnson A.D."/>
            <person name="Gygi S.P."/>
            <person name="Morgan D.O."/>
        </authorList>
    </citation>
    <scope>PHOSPHORYLATION [LARGE SCALE ANALYSIS] AT SER-208</scope>
    <scope>IDENTIFICATION BY MASS SPECTROMETRY [LARGE SCALE ANALYSIS]</scope>
</reference>
<protein>
    <recommendedName>
        <fullName>Protein SFK1</fullName>
    </recommendedName>
    <alternativeName>
        <fullName>Suppressor of four kinase protein 1</fullName>
    </alternativeName>
</protein>
<feature type="chain" id="PRO_0000203179" description="Protein SFK1">
    <location>
        <begin position="1"/>
        <end position="353"/>
    </location>
</feature>
<feature type="topological domain" description="Cytoplasmic" evidence="1">
    <location>
        <begin position="1"/>
        <end position="11"/>
    </location>
</feature>
<feature type="transmembrane region" description="Helical" evidence="1">
    <location>
        <begin position="12"/>
        <end position="32"/>
    </location>
</feature>
<feature type="topological domain" description="Extracellular" evidence="1">
    <location>
        <begin position="33"/>
        <end position="62"/>
    </location>
</feature>
<feature type="transmembrane region" description="Helical" evidence="1">
    <location>
        <begin position="63"/>
        <end position="83"/>
    </location>
</feature>
<feature type="topological domain" description="Cytoplasmic" evidence="1">
    <location>
        <begin position="84"/>
        <end position="130"/>
    </location>
</feature>
<feature type="transmembrane region" description="Helical" evidence="1">
    <location>
        <begin position="131"/>
        <end position="151"/>
    </location>
</feature>
<feature type="topological domain" description="Extracellular" evidence="1">
    <location>
        <begin position="152"/>
        <end position="160"/>
    </location>
</feature>
<feature type="transmembrane region" description="Helical" evidence="1">
    <location>
        <begin position="161"/>
        <end position="181"/>
    </location>
</feature>
<feature type="topological domain" description="Cytoplasmic" evidence="1">
    <location>
        <begin position="182"/>
        <end position="231"/>
    </location>
</feature>
<feature type="transmembrane region" description="Helical" evidence="1">
    <location>
        <begin position="232"/>
        <end position="253"/>
    </location>
</feature>
<feature type="topological domain" description="Extracellular" evidence="1">
    <location>
        <begin position="254"/>
        <end position="263"/>
    </location>
</feature>
<feature type="transmembrane region" description="Helical" evidence="1">
    <location>
        <begin position="264"/>
        <end position="284"/>
    </location>
</feature>
<feature type="topological domain" description="Cytoplasmic" evidence="1">
    <location>
        <begin position="285"/>
        <end position="353"/>
    </location>
</feature>
<feature type="modified residue" description="Phosphoserine" evidence="5">
    <location>
        <position position="208"/>
    </location>
</feature>
<sequence>MIQFKSPGNWLFIVPWIAFIPWYGMLIAMLICWASQGHPIYWFMHSEQFPVYISDIGATNLRPLFISCAGWQGLGYVITVALEFFQRSGYLPFQLKKKDPSISDSTSYAEKLHSGKYLMPPYYTKDERNLIFAAFVLGSIGELALLFSSIFSTALYHRVHIAMVSVFVVFMFLSTCCLIAEYFLMGRHYASVHPLASPHFNPQSSEKSFNQDYNTVDELPWYKWKGHVWNKFTISATLKVIWLTLAVVWAICFGAINDRSKSACFEWLLAFWFGIIFMILSADFYLGGRYRQSRYFNHVESFSGYYKYDKALGLYHSEDVLPSDDNAGVIATETASSNIYNNSSSNESIQVVV</sequence>
<name>SFK1_YEAST</name>